<keyword id="KW-1003">Cell membrane</keyword>
<keyword id="KW-0472">Membrane</keyword>
<keyword id="KW-1185">Reference proteome</keyword>
<keyword id="KW-0812">Transmembrane</keyword>
<keyword id="KW-1133">Transmembrane helix</keyword>
<keyword id="KW-0813">Transport</keyword>
<comment type="subcellular location">
    <subcellularLocation>
        <location evidence="3">Cell membrane</location>
        <topology evidence="3">Multi-pass membrane protein</topology>
    </subcellularLocation>
</comment>
<comment type="tissue specificity">
    <text evidence="3">Highly expressed in ovules, endosperm and embryo.</text>
</comment>
<comment type="similarity">
    <text evidence="4">Belongs to the nucleobase:cation symporter-2 (NCS2) (TC 2.A.40) family.</text>
</comment>
<comment type="sequence caution" evidence="4">
    <conflict type="erroneous gene model prediction">
        <sequence resource="EMBL-CDS" id="AAD39576"/>
    </conflict>
</comment>
<sequence>MAGDGVENAKPPQKQEDLQPHPVKDQLYGITYCLTSPPPWPETILLGFQHYLVMLGTTVLIPTMLVSKIDARNEDKVKLIQTLLFVSGINTLFQSFFGTRLPAVIGASYSYVPTTMSIVLAARYNDIMDPQKRFEQIMRGIQGALIIASFLHILVGFSGLWRNVTRFLSPLSAVPLVAFSGFGLYEQGFPMLAKCIEIGLPEIILLVIFSQYIPHLMQGETCSNFFHRFAVIFSVVIVWLYAYILTIGGAYSNTEINTQISCRTDRAGIISASPWIRVPHPIQWGGAPTFNAGDIFAMMAASFVSLVESTGTYIAVSRYASATPIPPSVLSRGIGWQGFGILLCGLFGAGNATSVSVENAGLLAVTRVGSRRVIQVAAGFMIFFSILGKFGAIFASIPAPIVAALYCLFFSYVGAGGLSLIQFCNLNSFRTKFILGFSIFMGLSIPQYFYQYTTLETYGPVRTSATWFNNIINVPFSSKAFVSGILAFFLDTTLPPKDKTTKKDRGLVWWKRFKSFQSDNRSEEFYSLPLNLSKYFPSH</sequence>
<feature type="chain" id="PRO_0000270165" description="Nucleobase-ascorbate transporter 8">
    <location>
        <begin position="1"/>
        <end position="539"/>
    </location>
</feature>
<feature type="transmembrane region" description="Helical" evidence="1">
    <location>
        <begin position="44"/>
        <end position="64"/>
    </location>
</feature>
<feature type="transmembrane region" description="Helical" evidence="1">
    <location>
        <begin position="79"/>
        <end position="99"/>
    </location>
</feature>
<feature type="transmembrane region" description="Helical" evidence="1">
    <location>
        <begin position="101"/>
        <end position="121"/>
    </location>
</feature>
<feature type="transmembrane region" description="Helical" evidence="1">
    <location>
        <begin position="141"/>
        <end position="161"/>
    </location>
</feature>
<feature type="transmembrane region" description="Helical" evidence="1">
    <location>
        <begin position="167"/>
        <end position="187"/>
    </location>
</feature>
<feature type="transmembrane region" description="Helical" evidence="1">
    <location>
        <begin position="189"/>
        <end position="209"/>
    </location>
</feature>
<feature type="transmembrane region" description="Helical" evidence="1">
    <location>
        <begin position="229"/>
        <end position="249"/>
    </location>
</feature>
<feature type="transmembrane region" description="Helical" evidence="1">
    <location>
        <begin position="295"/>
        <end position="315"/>
    </location>
</feature>
<feature type="transmembrane region" description="Helical" evidence="1">
    <location>
        <begin position="368"/>
        <end position="388"/>
    </location>
</feature>
<feature type="transmembrane region" description="Helical" evidence="1">
    <location>
        <begin position="399"/>
        <end position="421"/>
    </location>
</feature>
<feature type="transmembrane region" description="Helical" evidence="1">
    <location>
        <begin position="433"/>
        <end position="453"/>
    </location>
</feature>
<feature type="transmembrane region" description="Helical" evidence="1">
    <location>
        <begin position="470"/>
        <end position="490"/>
    </location>
</feature>
<feature type="region of interest" description="Disordered" evidence="2">
    <location>
        <begin position="1"/>
        <end position="20"/>
    </location>
</feature>
<dbReference type="EMBL" id="AC007067">
    <property type="protein sequence ID" value="AAD39576.1"/>
    <property type="status" value="ALT_SEQ"/>
    <property type="molecule type" value="Genomic_DNA"/>
</dbReference>
<dbReference type="EMBL" id="CP002684">
    <property type="protein sequence ID" value="AEE28592.1"/>
    <property type="molecule type" value="Genomic_DNA"/>
</dbReference>
<dbReference type="EMBL" id="AY063935">
    <property type="protein sequence ID" value="AAL36291.1"/>
    <property type="molecule type" value="mRNA"/>
</dbReference>
<dbReference type="EMBL" id="AY096464">
    <property type="protein sequence ID" value="AAM20104.1"/>
    <property type="molecule type" value="mRNA"/>
</dbReference>
<dbReference type="RefSeq" id="NP_172524.1">
    <property type="nucleotide sequence ID" value="NM_100929.5"/>
</dbReference>
<dbReference type="SMR" id="Q8VZQ5"/>
<dbReference type="FunCoup" id="Q8VZQ5">
    <property type="interactions" value="509"/>
</dbReference>
<dbReference type="STRING" id="3702.Q8VZQ5"/>
<dbReference type="PaxDb" id="3702-AT1G10540.1"/>
<dbReference type="ProteomicsDB" id="251046"/>
<dbReference type="EnsemblPlants" id="AT1G10540.1">
    <property type="protein sequence ID" value="AT1G10540.1"/>
    <property type="gene ID" value="AT1G10540"/>
</dbReference>
<dbReference type="GeneID" id="837595"/>
<dbReference type="Gramene" id="AT1G10540.1">
    <property type="protein sequence ID" value="AT1G10540.1"/>
    <property type="gene ID" value="AT1G10540"/>
</dbReference>
<dbReference type="KEGG" id="ath:AT1G10540"/>
<dbReference type="Araport" id="AT1G10540"/>
<dbReference type="TAIR" id="AT1G10540">
    <property type="gene designation" value="NAT8"/>
</dbReference>
<dbReference type="eggNOG" id="KOG1292">
    <property type="taxonomic scope" value="Eukaryota"/>
</dbReference>
<dbReference type="HOGENOM" id="CLU_017959_5_3_1"/>
<dbReference type="InParanoid" id="Q8VZQ5"/>
<dbReference type="OMA" id="PQYFYQY"/>
<dbReference type="OrthoDB" id="1641903at2759"/>
<dbReference type="PhylomeDB" id="Q8VZQ5"/>
<dbReference type="PRO" id="PR:Q8VZQ5"/>
<dbReference type="Proteomes" id="UP000006548">
    <property type="component" value="Chromosome 1"/>
</dbReference>
<dbReference type="ExpressionAtlas" id="Q8VZQ5">
    <property type="expression patterns" value="baseline and differential"/>
</dbReference>
<dbReference type="GO" id="GO:0005886">
    <property type="term" value="C:plasma membrane"/>
    <property type="evidence" value="ECO:0007669"/>
    <property type="project" value="UniProtKB-SubCell"/>
</dbReference>
<dbReference type="GO" id="GO:0009506">
    <property type="term" value="C:plasmodesma"/>
    <property type="evidence" value="ECO:0007005"/>
    <property type="project" value="TAIR"/>
</dbReference>
<dbReference type="GO" id="GO:0022857">
    <property type="term" value="F:transmembrane transporter activity"/>
    <property type="evidence" value="ECO:0007669"/>
    <property type="project" value="InterPro"/>
</dbReference>
<dbReference type="InterPro" id="IPR006043">
    <property type="entry name" value="NCS2"/>
</dbReference>
<dbReference type="NCBIfam" id="NF037981">
    <property type="entry name" value="NCS2_1"/>
    <property type="match status" value="1"/>
</dbReference>
<dbReference type="PANTHER" id="PTHR11119">
    <property type="entry name" value="XANTHINE-URACIL / VITAMIN C PERMEASE FAMILY MEMBER"/>
    <property type="match status" value="1"/>
</dbReference>
<dbReference type="Pfam" id="PF00860">
    <property type="entry name" value="Xan_ur_permease"/>
    <property type="match status" value="1"/>
</dbReference>
<reference key="1">
    <citation type="journal article" date="2000" name="Nature">
        <title>Sequence and analysis of chromosome 1 of the plant Arabidopsis thaliana.</title>
        <authorList>
            <person name="Theologis A."/>
            <person name="Ecker J.R."/>
            <person name="Palm C.J."/>
            <person name="Federspiel N.A."/>
            <person name="Kaul S."/>
            <person name="White O."/>
            <person name="Alonso J."/>
            <person name="Altafi H."/>
            <person name="Araujo R."/>
            <person name="Bowman C.L."/>
            <person name="Brooks S.Y."/>
            <person name="Buehler E."/>
            <person name="Chan A."/>
            <person name="Chao Q."/>
            <person name="Chen H."/>
            <person name="Cheuk R.F."/>
            <person name="Chin C.W."/>
            <person name="Chung M.K."/>
            <person name="Conn L."/>
            <person name="Conway A.B."/>
            <person name="Conway A.R."/>
            <person name="Creasy T.H."/>
            <person name="Dewar K."/>
            <person name="Dunn P."/>
            <person name="Etgu P."/>
            <person name="Feldblyum T.V."/>
            <person name="Feng J.-D."/>
            <person name="Fong B."/>
            <person name="Fujii C.Y."/>
            <person name="Gill J.E."/>
            <person name="Goldsmith A.D."/>
            <person name="Haas B."/>
            <person name="Hansen N.F."/>
            <person name="Hughes B."/>
            <person name="Huizar L."/>
            <person name="Hunter J.L."/>
            <person name="Jenkins J."/>
            <person name="Johnson-Hopson C."/>
            <person name="Khan S."/>
            <person name="Khaykin E."/>
            <person name="Kim C.J."/>
            <person name="Koo H.L."/>
            <person name="Kremenetskaia I."/>
            <person name="Kurtz D.B."/>
            <person name="Kwan A."/>
            <person name="Lam B."/>
            <person name="Langin-Hooper S."/>
            <person name="Lee A."/>
            <person name="Lee J.M."/>
            <person name="Lenz C.A."/>
            <person name="Li J.H."/>
            <person name="Li Y.-P."/>
            <person name="Lin X."/>
            <person name="Liu S.X."/>
            <person name="Liu Z.A."/>
            <person name="Luros J.S."/>
            <person name="Maiti R."/>
            <person name="Marziali A."/>
            <person name="Militscher J."/>
            <person name="Miranda M."/>
            <person name="Nguyen M."/>
            <person name="Nierman W.C."/>
            <person name="Osborne B.I."/>
            <person name="Pai G."/>
            <person name="Peterson J."/>
            <person name="Pham P.K."/>
            <person name="Rizzo M."/>
            <person name="Rooney T."/>
            <person name="Rowley D."/>
            <person name="Sakano H."/>
            <person name="Salzberg S.L."/>
            <person name="Schwartz J.R."/>
            <person name="Shinn P."/>
            <person name="Southwick A.M."/>
            <person name="Sun H."/>
            <person name="Tallon L.J."/>
            <person name="Tambunga G."/>
            <person name="Toriumi M.J."/>
            <person name="Town C.D."/>
            <person name="Utterback T."/>
            <person name="Van Aken S."/>
            <person name="Vaysberg M."/>
            <person name="Vysotskaia V.S."/>
            <person name="Walker M."/>
            <person name="Wu D."/>
            <person name="Yu G."/>
            <person name="Fraser C.M."/>
            <person name="Venter J.C."/>
            <person name="Davis R.W."/>
        </authorList>
    </citation>
    <scope>NUCLEOTIDE SEQUENCE [LARGE SCALE GENOMIC DNA]</scope>
    <source>
        <strain>cv. Columbia</strain>
    </source>
</reference>
<reference key="2">
    <citation type="journal article" date="2017" name="Plant J.">
        <title>Araport11: a complete reannotation of the Arabidopsis thaliana reference genome.</title>
        <authorList>
            <person name="Cheng C.Y."/>
            <person name="Krishnakumar V."/>
            <person name="Chan A.P."/>
            <person name="Thibaud-Nissen F."/>
            <person name="Schobel S."/>
            <person name="Town C.D."/>
        </authorList>
    </citation>
    <scope>GENOME REANNOTATION</scope>
    <source>
        <strain>cv. Columbia</strain>
    </source>
</reference>
<reference key="3">
    <citation type="journal article" date="2003" name="Science">
        <title>Empirical analysis of transcriptional activity in the Arabidopsis genome.</title>
        <authorList>
            <person name="Yamada K."/>
            <person name="Lim J."/>
            <person name="Dale J.M."/>
            <person name="Chen H."/>
            <person name="Shinn P."/>
            <person name="Palm C.J."/>
            <person name="Southwick A.M."/>
            <person name="Wu H.C."/>
            <person name="Kim C.J."/>
            <person name="Nguyen M."/>
            <person name="Pham P.K."/>
            <person name="Cheuk R.F."/>
            <person name="Karlin-Newmann G."/>
            <person name="Liu S.X."/>
            <person name="Lam B."/>
            <person name="Sakano H."/>
            <person name="Wu T."/>
            <person name="Yu G."/>
            <person name="Miranda M."/>
            <person name="Quach H.L."/>
            <person name="Tripp M."/>
            <person name="Chang C.H."/>
            <person name="Lee J.M."/>
            <person name="Toriumi M.J."/>
            <person name="Chan M.M."/>
            <person name="Tang C.C."/>
            <person name="Onodera C.S."/>
            <person name="Deng J.M."/>
            <person name="Akiyama K."/>
            <person name="Ansari Y."/>
            <person name="Arakawa T."/>
            <person name="Banh J."/>
            <person name="Banno F."/>
            <person name="Bowser L."/>
            <person name="Brooks S.Y."/>
            <person name="Carninci P."/>
            <person name="Chao Q."/>
            <person name="Choy N."/>
            <person name="Enju A."/>
            <person name="Goldsmith A.D."/>
            <person name="Gurjal M."/>
            <person name="Hansen N.F."/>
            <person name="Hayashizaki Y."/>
            <person name="Johnson-Hopson C."/>
            <person name="Hsuan V.W."/>
            <person name="Iida K."/>
            <person name="Karnes M."/>
            <person name="Khan S."/>
            <person name="Koesema E."/>
            <person name="Ishida J."/>
            <person name="Jiang P.X."/>
            <person name="Jones T."/>
            <person name="Kawai J."/>
            <person name="Kamiya A."/>
            <person name="Meyers C."/>
            <person name="Nakajima M."/>
            <person name="Narusaka M."/>
            <person name="Seki M."/>
            <person name="Sakurai T."/>
            <person name="Satou M."/>
            <person name="Tamse R."/>
            <person name="Vaysberg M."/>
            <person name="Wallender E.K."/>
            <person name="Wong C."/>
            <person name="Yamamura Y."/>
            <person name="Yuan S."/>
            <person name="Shinozaki K."/>
            <person name="Davis R.W."/>
            <person name="Theologis A."/>
            <person name="Ecker J.R."/>
        </authorList>
    </citation>
    <scope>NUCLEOTIDE SEQUENCE [LARGE SCALE MRNA]</scope>
    <source>
        <strain>cv. Columbia</strain>
    </source>
</reference>
<reference key="4">
    <citation type="journal article" date="2006" name="Plant Cell Physiol.">
        <title>Identification and expression analysis of twelve members of the nucleobase-ascorbate transporter (NAT) gene family in Arabidopsis thaliana.</title>
        <authorList>
            <person name="Maurino V.G."/>
            <person name="Grube E."/>
            <person name="Zielinski J."/>
            <person name="Schild A."/>
            <person name="Fischer K."/>
            <person name="Flugge U.-I."/>
        </authorList>
    </citation>
    <scope>GENE FAMILY</scope>
    <scope>SUBCELLULAR LOCATION</scope>
    <scope>TISSUE SPECIFICITY</scope>
</reference>
<gene>
    <name type="primary">NAT8</name>
    <name type="ordered locus">At1g10540</name>
    <name type="ORF">T10O24.15</name>
    <name type="ORF">T10O24.16</name>
</gene>
<evidence type="ECO:0000255" key="1"/>
<evidence type="ECO:0000256" key="2">
    <source>
        <dbReference type="SAM" id="MobiDB-lite"/>
    </source>
</evidence>
<evidence type="ECO:0000269" key="3">
    <source>
    </source>
</evidence>
<evidence type="ECO:0000305" key="4"/>
<accession>Q8VZQ5</accession>
<accession>Q9XIJ8</accession>
<name>NAT8_ARATH</name>
<organism>
    <name type="scientific">Arabidopsis thaliana</name>
    <name type="common">Mouse-ear cress</name>
    <dbReference type="NCBI Taxonomy" id="3702"/>
    <lineage>
        <taxon>Eukaryota</taxon>
        <taxon>Viridiplantae</taxon>
        <taxon>Streptophyta</taxon>
        <taxon>Embryophyta</taxon>
        <taxon>Tracheophyta</taxon>
        <taxon>Spermatophyta</taxon>
        <taxon>Magnoliopsida</taxon>
        <taxon>eudicotyledons</taxon>
        <taxon>Gunneridae</taxon>
        <taxon>Pentapetalae</taxon>
        <taxon>rosids</taxon>
        <taxon>malvids</taxon>
        <taxon>Brassicales</taxon>
        <taxon>Brassicaceae</taxon>
        <taxon>Camelineae</taxon>
        <taxon>Arabidopsis</taxon>
    </lineage>
</organism>
<protein>
    <recommendedName>
        <fullName>Nucleobase-ascorbate transporter 8</fullName>
        <shortName>AtNAT8</shortName>
    </recommendedName>
</protein>
<proteinExistence type="evidence at transcript level"/>